<accession>P9WP58</accession>
<accession>L0T678</accession>
<accession>P95041</accession>
<accession>Q7D9E8</accession>
<proteinExistence type="inferred from homology"/>
<gene>
    <name type="primary">mftE</name>
    <name type="ordered locus">MT0722</name>
</gene>
<keyword id="KW-0378">Hydrolase</keyword>
<keyword id="KW-0408">Iron</keyword>
<keyword id="KW-0479">Metal-binding</keyword>
<keyword id="KW-1185">Reference proteome</keyword>
<keyword id="KW-0862">Zinc</keyword>
<protein>
    <recommendedName>
        <fullName>Mycofactocin precursor peptide peptidase</fullName>
        <ecNumber evidence="1">3.4.14.14</ecNumber>
    </recommendedName>
</protein>
<organism>
    <name type="scientific">Mycobacterium tuberculosis (strain CDC 1551 / Oshkosh)</name>
    <dbReference type="NCBI Taxonomy" id="83331"/>
    <lineage>
        <taxon>Bacteria</taxon>
        <taxon>Bacillati</taxon>
        <taxon>Actinomycetota</taxon>
        <taxon>Actinomycetes</taxon>
        <taxon>Mycobacteriales</taxon>
        <taxon>Mycobacteriaceae</taxon>
        <taxon>Mycobacterium</taxon>
        <taxon>Mycobacterium tuberculosis complex</taxon>
    </lineage>
</organism>
<evidence type="ECO:0000250" key="1">
    <source>
        <dbReference type="UniProtKB" id="A0PM51"/>
    </source>
</evidence>
<evidence type="ECO:0000250" key="2">
    <source>
        <dbReference type="UniProtKB" id="P83772"/>
    </source>
</evidence>
<evidence type="ECO:0000305" key="3"/>
<name>MFTE_MYCTO</name>
<comment type="function">
    <text evidence="1">Peptidase involved in the biosynthesis of the enzyme cofactor mycofactocin (MFT). Catalyzes cleavage of the MftC-modified MftA peptide to liberate its final two residues, which consist of a cross-linked valine-decarboxylated tyrosine dipeptide (named 3-amino-5-[(4-hydroxyphenyl)methyl]-4,4-dimethyl-2-pyrrolidin-2-one or ADHP).</text>
</comment>
<comment type="catalytic activity">
    <reaction evidence="1">
        <text>[mycofactocin precursor peptide]-C-terminal glycyl-N-{5-[(4-hydroxyphenyl)methyl]-4,4-dimethyl-2-oxopyrrolidin-3-yl}acetamide + H2O = [mycofactocin precursor peptide]-C-terminal glycine + 3-amino-5-[(4-hydroxyphenyl)methyl]-4,4-dimethyl-2-pyrrolidin-2-one</text>
        <dbReference type="Rhea" id="RHEA:65504"/>
        <dbReference type="Rhea" id="RHEA-COMP:16818"/>
        <dbReference type="Rhea" id="RHEA-COMP:16819"/>
        <dbReference type="ChEBI" id="CHEBI:15377"/>
        <dbReference type="ChEBI" id="CHEBI:83148"/>
        <dbReference type="ChEBI" id="CHEBI:150863"/>
        <dbReference type="ChEBI" id="CHEBI:156518"/>
        <dbReference type="EC" id="3.4.14.14"/>
    </reaction>
</comment>
<comment type="cofactor">
    <cofactor evidence="1">
        <name>Fe(2+)</name>
        <dbReference type="ChEBI" id="CHEBI:29033"/>
    </cofactor>
    <text evidence="1">MftE appears to bind one Fe(2+) and one Zn(2+) ion per subunit. Fe(2+) seems to be catalytically active while Zn(2+) could play an auxiliary role.</text>
</comment>
<comment type="cofactor">
    <cofactor evidence="1">
        <name>Zn(2+)</name>
        <dbReference type="ChEBI" id="CHEBI:29105"/>
    </cofactor>
</comment>
<comment type="subunit">
    <text evidence="1">Homooctamer.</text>
</comment>
<comment type="similarity">
    <text evidence="3">Belongs to the creatininase superfamily.</text>
</comment>
<reference key="1">
    <citation type="journal article" date="2002" name="J. Bacteriol.">
        <title>Whole-genome comparison of Mycobacterium tuberculosis clinical and laboratory strains.</title>
        <authorList>
            <person name="Fleischmann R.D."/>
            <person name="Alland D."/>
            <person name="Eisen J.A."/>
            <person name="Carpenter L."/>
            <person name="White O."/>
            <person name="Peterson J.D."/>
            <person name="DeBoy R.T."/>
            <person name="Dodson R.J."/>
            <person name="Gwinn M.L."/>
            <person name="Haft D.H."/>
            <person name="Hickey E.K."/>
            <person name="Kolonay J.F."/>
            <person name="Nelson W.C."/>
            <person name="Umayam L.A."/>
            <person name="Ermolaeva M.D."/>
            <person name="Salzberg S.L."/>
            <person name="Delcher A."/>
            <person name="Utterback T.R."/>
            <person name="Weidman J.F."/>
            <person name="Khouri H.M."/>
            <person name="Gill J."/>
            <person name="Mikula A."/>
            <person name="Bishai W."/>
            <person name="Jacobs W.R. Jr."/>
            <person name="Venter J.C."/>
            <person name="Fraser C.M."/>
        </authorList>
    </citation>
    <scope>NUCLEOTIDE SEQUENCE [LARGE SCALE GENOMIC DNA]</scope>
    <source>
        <strain>CDC 1551 / Oshkosh</strain>
    </source>
</reference>
<sequence length="251" mass="26580">MNSSYHRRVPVVGELGSATSSQLPSTSPSIVIPLGSTEQHGPHLPLDTDTRIATAVARTVTARLHAEDLPIAQEEWLMAPAIAYGASGEHQRFAGTISIGTEALTMLLVEYGRSAACWARRLVFVNGHGGNVGALTRAVGLLRAEGRDAGWCPCTCPGGDPHAGHTETSVLLHLSPADVRTERWRAGNRAPLPVLLPSMRRGGVAAVSETGVLGDPTTATAAEGRRIFAAMVDDCVRRVARWMPQPDGMLT</sequence>
<dbReference type="EC" id="3.4.14.14" evidence="1"/>
<dbReference type="EMBL" id="AE000516">
    <property type="protein sequence ID" value="AAK44951.1"/>
    <property type="molecule type" value="Genomic_DNA"/>
</dbReference>
<dbReference type="PIR" id="B70641">
    <property type="entry name" value="B70641"/>
</dbReference>
<dbReference type="RefSeq" id="WP_003403497.1">
    <property type="nucleotide sequence ID" value="NZ_KK341227.1"/>
</dbReference>
<dbReference type="SMR" id="P9WP58"/>
<dbReference type="GeneID" id="45424659"/>
<dbReference type="KEGG" id="mtc:MT0722"/>
<dbReference type="PATRIC" id="fig|83331.31.peg.772"/>
<dbReference type="HOGENOM" id="CLU_055029_4_0_11"/>
<dbReference type="Proteomes" id="UP000001020">
    <property type="component" value="Chromosome"/>
</dbReference>
<dbReference type="GO" id="GO:0016811">
    <property type="term" value="F:hydrolase activity, acting on carbon-nitrogen (but not peptide) bonds, in linear amides"/>
    <property type="evidence" value="ECO:0007669"/>
    <property type="project" value="TreeGrafter"/>
</dbReference>
<dbReference type="GO" id="GO:0046872">
    <property type="term" value="F:metal ion binding"/>
    <property type="evidence" value="ECO:0007669"/>
    <property type="project" value="UniProtKB-KW"/>
</dbReference>
<dbReference type="GO" id="GO:0009231">
    <property type="term" value="P:riboflavin biosynthetic process"/>
    <property type="evidence" value="ECO:0007669"/>
    <property type="project" value="TreeGrafter"/>
</dbReference>
<dbReference type="Gene3D" id="3.40.50.10310">
    <property type="entry name" value="Creatininase"/>
    <property type="match status" value="1"/>
</dbReference>
<dbReference type="InterPro" id="IPR024087">
    <property type="entry name" value="Creatininase-like_sf"/>
</dbReference>
<dbReference type="InterPro" id="IPR003785">
    <property type="entry name" value="Creatininase/forma_Hydrolase"/>
</dbReference>
<dbReference type="InterPro" id="IPR023871">
    <property type="entry name" value="MftE"/>
</dbReference>
<dbReference type="NCBIfam" id="TIGR03964">
    <property type="entry name" value="mycofact_creat"/>
    <property type="match status" value="1"/>
</dbReference>
<dbReference type="PANTHER" id="PTHR35005:SF1">
    <property type="entry name" value="2-AMINO-5-FORMYLAMINO-6-RIBOSYLAMINOPYRIMIDIN-4(3H)-ONE 5'-MONOPHOSPHATE DEFORMYLASE"/>
    <property type="match status" value="1"/>
</dbReference>
<dbReference type="PANTHER" id="PTHR35005">
    <property type="entry name" value="3-DEHYDRO-SCYLLO-INOSOSE HYDROLASE"/>
    <property type="match status" value="1"/>
</dbReference>
<dbReference type="Pfam" id="PF02633">
    <property type="entry name" value="Creatininase"/>
    <property type="match status" value="1"/>
</dbReference>
<dbReference type="SUPFAM" id="SSF102215">
    <property type="entry name" value="Creatininase"/>
    <property type="match status" value="1"/>
</dbReference>
<feature type="chain" id="PRO_0000427009" description="Mycofactocin precursor peptide peptidase">
    <location>
        <begin position="1"/>
        <end position="251"/>
    </location>
</feature>
<feature type="binding site" evidence="2">
    <location>
        <position position="38"/>
    </location>
    <ligand>
        <name>a divalent metal cation</name>
        <dbReference type="ChEBI" id="CHEBI:60240"/>
        <label>1</label>
    </ligand>
</feature>
<feature type="binding site" evidence="2">
    <location>
        <position position="40"/>
    </location>
    <ligand>
        <name>a divalent metal cation</name>
        <dbReference type="ChEBI" id="CHEBI:60240"/>
        <label>2</label>
    </ligand>
</feature>
<feature type="binding site" evidence="2">
    <location>
        <position position="49"/>
    </location>
    <ligand>
        <name>a divalent metal cation</name>
        <dbReference type="ChEBI" id="CHEBI:60240"/>
        <label>1</label>
    </ligand>
</feature>
<feature type="binding site" evidence="2">
    <location>
        <position position="49"/>
    </location>
    <ligand>
        <name>a divalent metal cation</name>
        <dbReference type="ChEBI" id="CHEBI:60240"/>
        <label>2</label>
    </ligand>
</feature>
<feature type="binding site" evidence="2">
    <location>
        <position position="128"/>
    </location>
    <ligand>
        <name>a divalent metal cation</name>
        <dbReference type="ChEBI" id="CHEBI:60240"/>
        <label>1</label>
    </ligand>
</feature>
<feature type="binding site" evidence="2">
    <location>
        <position position="167"/>
    </location>
    <ligand>
        <name>a divalent metal cation</name>
        <dbReference type="ChEBI" id="CHEBI:60240"/>
        <label>2</label>
    </ligand>
</feature>